<organism>
    <name type="scientific">Saccharomyces cerevisiae (strain ATCC 204508 / S288c)</name>
    <name type="common">Baker's yeast</name>
    <dbReference type="NCBI Taxonomy" id="559292"/>
    <lineage>
        <taxon>Eukaryota</taxon>
        <taxon>Fungi</taxon>
        <taxon>Dikarya</taxon>
        <taxon>Ascomycota</taxon>
        <taxon>Saccharomycotina</taxon>
        <taxon>Saccharomycetes</taxon>
        <taxon>Saccharomycetales</taxon>
        <taxon>Saccharomycetaceae</taxon>
        <taxon>Saccharomyces</taxon>
    </lineage>
</organism>
<reference key="1">
    <citation type="journal article" date="1992" name="Nature">
        <title>The complete DNA sequence of yeast chromosome III.</title>
        <authorList>
            <person name="Oliver S.G."/>
            <person name="van der Aart Q.J.M."/>
            <person name="Agostoni-Carbone M.L."/>
            <person name="Aigle M."/>
            <person name="Alberghina L."/>
            <person name="Alexandraki D."/>
            <person name="Antoine G."/>
            <person name="Anwar R."/>
            <person name="Ballesta J.P.G."/>
            <person name="Benit P."/>
            <person name="Berben G."/>
            <person name="Bergantino E."/>
            <person name="Biteau N."/>
            <person name="Bolle P.-A."/>
            <person name="Bolotin-Fukuhara M."/>
            <person name="Brown A."/>
            <person name="Brown A.J.P."/>
            <person name="Buhler J.-M."/>
            <person name="Carcano C."/>
            <person name="Carignani G."/>
            <person name="Cederberg H."/>
            <person name="Chanet R."/>
            <person name="Contreras R."/>
            <person name="Crouzet M."/>
            <person name="Daignan-Fornier B."/>
            <person name="Defoor E."/>
            <person name="Delgado M.D."/>
            <person name="Demolder J."/>
            <person name="Doira C."/>
            <person name="Dubois E."/>
            <person name="Dujon B."/>
            <person name="Duesterhoeft A."/>
            <person name="Erdmann D."/>
            <person name="Esteban M."/>
            <person name="Fabre F."/>
            <person name="Fairhead C."/>
            <person name="Faye G."/>
            <person name="Feldmann H."/>
            <person name="Fiers W."/>
            <person name="Francingues-Gaillard M.-C."/>
            <person name="Franco L."/>
            <person name="Frontali L."/>
            <person name="Fukuhara H."/>
            <person name="Fuller L.J."/>
            <person name="Galland P."/>
            <person name="Gent M.E."/>
            <person name="Gigot D."/>
            <person name="Gilliquet V."/>
            <person name="Glansdorff N."/>
            <person name="Goffeau A."/>
            <person name="Grenson M."/>
            <person name="Grisanti P."/>
            <person name="Grivell L.A."/>
            <person name="de Haan M."/>
            <person name="Haasemann M."/>
            <person name="Hatat D."/>
            <person name="Hoenicka J."/>
            <person name="Hegemann J.H."/>
            <person name="Herbert C.J."/>
            <person name="Hilger F."/>
            <person name="Hohmann S."/>
            <person name="Hollenberg C.P."/>
            <person name="Huse K."/>
            <person name="Iborra F."/>
            <person name="Indge K.J."/>
            <person name="Isono K."/>
            <person name="Jacq C."/>
            <person name="Jacquet M."/>
            <person name="James C.M."/>
            <person name="Jauniaux J.-C."/>
            <person name="Jia Y."/>
            <person name="Jimenez A."/>
            <person name="Kelly A."/>
            <person name="Kleinhans U."/>
            <person name="Kreisl P."/>
            <person name="Lanfranchi G."/>
            <person name="Lewis C."/>
            <person name="van der Linden C.G."/>
            <person name="Lucchini G."/>
            <person name="Lutzenkirchen K."/>
            <person name="Maat M.J."/>
            <person name="Mallet L."/>
            <person name="Mannhaupt G."/>
            <person name="Martegani E."/>
            <person name="Mathieu A."/>
            <person name="Maurer C.T.C."/>
            <person name="McConnell D."/>
            <person name="McKee R.A."/>
            <person name="Messenguy F."/>
            <person name="Mewes H.-W."/>
            <person name="Molemans F."/>
            <person name="Montague M.A."/>
            <person name="Muzi Falconi M."/>
            <person name="Navas L."/>
            <person name="Newlon C.S."/>
            <person name="Noone D."/>
            <person name="Pallier C."/>
            <person name="Panzeri L."/>
            <person name="Pearson B.M."/>
            <person name="Perea J."/>
            <person name="Philippsen P."/>
            <person name="Pierard A."/>
            <person name="Planta R.J."/>
            <person name="Plevani P."/>
            <person name="Poetsch B."/>
            <person name="Pohl F.M."/>
            <person name="Purnelle B."/>
            <person name="Ramezani Rad M."/>
            <person name="Rasmussen S.W."/>
            <person name="Raynal A."/>
            <person name="Remacha M.A."/>
            <person name="Richterich P."/>
            <person name="Roberts A.B."/>
            <person name="Rodriguez F."/>
            <person name="Sanz E."/>
            <person name="Schaaff-Gerstenschlaeger I."/>
            <person name="Scherens B."/>
            <person name="Schweitzer B."/>
            <person name="Shu Y."/>
            <person name="Skala J."/>
            <person name="Slonimski P.P."/>
            <person name="Sor F."/>
            <person name="Soustelle C."/>
            <person name="Spiegelberg R."/>
            <person name="Stateva L.I."/>
            <person name="Steensma H.Y."/>
            <person name="Steiner S."/>
            <person name="Thierry A."/>
            <person name="Thireos G."/>
            <person name="Tzermia M."/>
            <person name="Urrestarazu L.A."/>
            <person name="Valle G."/>
            <person name="Vetter I."/>
            <person name="van Vliet-Reedijk J.C."/>
            <person name="Voet M."/>
            <person name="Volckaert G."/>
            <person name="Vreken P."/>
            <person name="Wang H."/>
            <person name="Warmington J.R."/>
            <person name="von Wettstein D."/>
            <person name="Wicksteed B.L."/>
            <person name="Wilson C."/>
            <person name="Wurst H."/>
            <person name="Xu G."/>
            <person name="Yoshikawa A."/>
            <person name="Zimmermann F.K."/>
            <person name="Sgouros J.G."/>
        </authorList>
    </citation>
    <scope>NUCLEOTIDE SEQUENCE [LARGE SCALE GENOMIC DNA]</scope>
    <source>
        <strain>ATCC 204508 / S288c</strain>
    </source>
</reference>
<reference key="2">
    <citation type="journal article" date="2014" name="G3 (Bethesda)">
        <title>The reference genome sequence of Saccharomyces cerevisiae: Then and now.</title>
        <authorList>
            <person name="Engel S.R."/>
            <person name="Dietrich F.S."/>
            <person name="Fisk D.G."/>
            <person name="Binkley G."/>
            <person name="Balakrishnan R."/>
            <person name="Costanzo M.C."/>
            <person name="Dwight S.S."/>
            <person name="Hitz B.C."/>
            <person name="Karra K."/>
            <person name="Nash R.S."/>
            <person name="Weng S."/>
            <person name="Wong E.D."/>
            <person name="Lloyd P."/>
            <person name="Skrzypek M.S."/>
            <person name="Miyasato S.R."/>
            <person name="Simison M."/>
            <person name="Cherry J.M."/>
        </authorList>
    </citation>
    <scope>GENOME REANNOTATION</scope>
    <source>
        <strain>ATCC 204508 / S288c</strain>
    </source>
</reference>
<proteinExistence type="uncertain"/>
<name>YCX7_YEAST</name>
<gene>
    <name type="ordered locus">YCR087W</name>
    <name type="ORF">YCR87W</name>
</gene>
<protein>
    <recommendedName>
        <fullName>Putative uncharacterized protein YCR087W</fullName>
    </recommendedName>
</protein>
<accession>P25652</accession>
<dbReference type="EMBL" id="X59720">
    <property type="protein sequence ID" value="CAA42262.1"/>
    <property type="molecule type" value="Genomic_DNA"/>
</dbReference>
<dbReference type="PIR" id="S19502">
    <property type="entry name" value="S19502"/>
</dbReference>
<dbReference type="SMR" id="P25652"/>
<dbReference type="DIP" id="DIP-1696N"/>
<dbReference type="IntAct" id="P25652">
    <property type="interactions" value="5"/>
</dbReference>
<dbReference type="MINT" id="P25652"/>
<dbReference type="STRING" id="4932.YCR087W"/>
<dbReference type="PaxDb" id="4932-YCR087W"/>
<dbReference type="EnsemblFungi" id="YCR087W_mRNA">
    <property type="protein sequence ID" value="YCR087W"/>
    <property type="gene ID" value="YCR087W"/>
</dbReference>
<dbReference type="AGR" id="SGD:S000000683"/>
<dbReference type="SGD" id="S000000683">
    <property type="gene designation" value="YCR087W"/>
</dbReference>
<dbReference type="HOGENOM" id="CLU_1564128_0_0_1"/>
<feature type="chain" id="PRO_0000202579" description="Putative uncharacterized protein YCR087W">
    <location>
        <begin position="1"/>
        <end position="171"/>
    </location>
</feature>
<comment type="miscellaneous">
    <text evidence="1">Completely overlaps YCR087C-A.</text>
</comment>
<comment type="caution">
    <text evidence="2">Product of a dubious gene prediction unlikely to encode a functional protein. Because of that it is not part of the S.cerevisiae S288c complete/reference proteome set.</text>
</comment>
<sequence>MSIYLHIKFRLFLCIPDLPLRIHNQTFQEGLFCPFILHGFQNFVQRLALVKLDTVRGLFHFLCLLDHRLLHFLCRSCHWLVLVLLLLLLLLLLLLLLLVALVQRFLVLLVLADARRVILVTHAIFKRLGAIYACIVRVRTSIIMLFGILLGHSIITHLTVERNHPVITNIS</sequence>
<evidence type="ECO:0000305" key="1"/>
<evidence type="ECO:0000305" key="2">
    <source>
    </source>
</evidence>